<accession>B6I7N7</accession>
<reference key="1">
    <citation type="journal article" date="2008" name="DNA Res.">
        <title>Complete genome sequence and comparative analysis of the wild-type commensal Escherichia coli strain SE11 isolated from a healthy adult.</title>
        <authorList>
            <person name="Oshima K."/>
            <person name="Toh H."/>
            <person name="Ogura Y."/>
            <person name="Sasamoto H."/>
            <person name="Morita H."/>
            <person name="Park S.-H."/>
            <person name="Ooka T."/>
            <person name="Iyoda S."/>
            <person name="Taylor T.D."/>
            <person name="Hayashi T."/>
            <person name="Itoh K."/>
            <person name="Hattori M."/>
        </authorList>
    </citation>
    <scope>NUCLEOTIDE SEQUENCE [LARGE SCALE GENOMIC DNA]</scope>
    <source>
        <strain>SE11</strain>
    </source>
</reference>
<proteinExistence type="inferred from homology"/>
<gene>
    <name evidence="1" type="primary">nuoB</name>
    <name type="ordered locus">ECSE_2544</name>
</gene>
<keyword id="KW-0004">4Fe-4S</keyword>
<keyword id="KW-0997">Cell inner membrane</keyword>
<keyword id="KW-1003">Cell membrane</keyword>
<keyword id="KW-0408">Iron</keyword>
<keyword id="KW-0411">Iron-sulfur</keyword>
<keyword id="KW-0472">Membrane</keyword>
<keyword id="KW-0479">Metal-binding</keyword>
<keyword id="KW-0520">NAD</keyword>
<keyword id="KW-0874">Quinone</keyword>
<keyword id="KW-1278">Translocase</keyword>
<keyword id="KW-0813">Transport</keyword>
<keyword id="KW-0830">Ubiquinone</keyword>
<dbReference type="EC" id="7.1.1.-" evidence="1"/>
<dbReference type="EMBL" id="AP009240">
    <property type="protein sequence ID" value="BAG78068.1"/>
    <property type="molecule type" value="Genomic_DNA"/>
</dbReference>
<dbReference type="RefSeq" id="WP_000386733.1">
    <property type="nucleotide sequence ID" value="NC_011415.1"/>
</dbReference>
<dbReference type="SMR" id="B6I7N7"/>
<dbReference type="GeneID" id="93774887"/>
<dbReference type="KEGG" id="ecy:ECSE_2544"/>
<dbReference type="HOGENOM" id="CLU_055737_7_3_6"/>
<dbReference type="Proteomes" id="UP000008199">
    <property type="component" value="Chromosome"/>
</dbReference>
<dbReference type="GO" id="GO:0005886">
    <property type="term" value="C:plasma membrane"/>
    <property type="evidence" value="ECO:0007669"/>
    <property type="project" value="UniProtKB-SubCell"/>
</dbReference>
<dbReference type="GO" id="GO:0045271">
    <property type="term" value="C:respiratory chain complex I"/>
    <property type="evidence" value="ECO:0007669"/>
    <property type="project" value="TreeGrafter"/>
</dbReference>
<dbReference type="GO" id="GO:0051539">
    <property type="term" value="F:4 iron, 4 sulfur cluster binding"/>
    <property type="evidence" value="ECO:0007669"/>
    <property type="project" value="UniProtKB-KW"/>
</dbReference>
<dbReference type="GO" id="GO:0005506">
    <property type="term" value="F:iron ion binding"/>
    <property type="evidence" value="ECO:0007669"/>
    <property type="project" value="UniProtKB-UniRule"/>
</dbReference>
<dbReference type="GO" id="GO:0008137">
    <property type="term" value="F:NADH dehydrogenase (ubiquinone) activity"/>
    <property type="evidence" value="ECO:0007669"/>
    <property type="project" value="InterPro"/>
</dbReference>
<dbReference type="GO" id="GO:0050136">
    <property type="term" value="F:NADH:ubiquinone reductase (non-electrogenic) activity"/>
    <property type="evidence" value="ECO:0007669"/>
    <property type="project" value="UniProtKB-UniRule"/>
</dbReference>
<dbReference type="GO" id="GO:0048038">
    <property type="term" value="F:quinone binding"/>
    <property type="evidence" value="ECO:0007669"/>
    <property type="project" value="UniProtKB-KW"/>
</dbReference>
<dbReference type="GO" id="GO:0009060">
    <property type="term" value="P:aerobic respiration"/>
    <property type="evidence" value="ECO:0007669"/>
    <property type="project" value="TreeGrafter"/>
</dbReference>
<dbReference type="GO" id="GO:0015990">
    <property type="term" value="P:electron transport coupled proton transport"/>
    <property type="evidence" value="ECO:0007669"/>
    <property type="project" value="TreeGrafter"/>
</dbReference>
<dbReference type="FunFam" id="3.40.50.12280:FF:000002">
    <property type="entry name" value="NADH-quinone oxidoreductase subunit B"/>
    <property type="match status" value="1"/>
</dbReference>
<dbReference type="Gene3D" id="3.40.50.12280">
    <property type="match status" value="1"/>
</dbReference>
<dbReference type="HAMAP" id="MF_01356">
    <property type="entry name" value="NDH1_NuoB"/>
    <property type="match status" value="1"/>
</dbReference>
<dbReference type="InterPro" id="IPR006137">
    <property type="entry name" value="NADH_UbQ_OxRdtase-like_20kDa"/>
</dbReference>
<dbReference type="InterPro" id="IPR006138">
    <property type="entry name" value="NADH_UQ_OxRdtase_20Kd_su"/>
</dbReference>
<dbReference type="NCBIfam" id="TIGR01957">
    <property type="entry name" value="nuoB_fam"/>
    <property type="match status" value="1"/>
</dbReference>
<dbReference type="NCBIfam" id="NF005012">
    <property type="entry name" value="PRK06411.1"/>
    <property type="match status" value="1"/>
</dbReference>
<dbReference type="PANTHER" id="PTHR11995">
    <property type="entry name" value="NADH DEHYDROGENASE"/>
    <property type="match status" value="1"/>
</dbReference>
<dbReference type="PANTHER" id="PTHR11995:SF14">
    <property type="entry name" value="NADH DEHYDROGENASE [UBIQUINONE] IRON-SULFUR PROTEIN 7, MITOCHONDRIAL"/>
    <property type="match status" value="1"/>
</dbReference>
<dbReference type="Pfam" id="PF01058">
    <property type="entry name" value="Oxidored_q6"/>
    <property type="match status" value="1"/>
</dbReference>
<dbReference type="SUPFAM" id="SSF56770">
    <property type="entry name" value="HydA/Nqo6-like"/>
    <property type="match status" value="1"/>
</dbReference>
<dbReference type="PROSITE" id="PS01150">
    <property type="entry name" value="COMPLEX1_20K"/>
    <property type="match status" value="1"/>
</dbReference>
<name>NUOB_ECOSE</name>
<sequence>MDYTLTRIDPNGENDRYPLQKQEIVTDPLEQEVNKNVFMGKLNDMVNWGRKNSIWPYNFGLSCCYVEMVTSFTAVHDVARFGAEVLRASPRQADLMVVAGTCFTKMAPVIQRLYDQMLEPKWVISMGACANSGGMYDIYSVVQGVDKFIPVDVYIPGCPPRPEAYMQALMLLQESIGKERRPLSWVVGDQGVYRANMQSERERKRGERIAVTNLRTPDEI</sequence>
<feature type="chain" id="PRO_0000376209" description="NADH-quinone oxidoreductase subunit B">
    <location>
        <begin position="1"/>
        <end position="220"/>
    </location>
</feature>
<feature type="binding site" evidence="1">
    <location>
        <position position="63"/>
    </location>
    <ligand>
        <name>[4Fe-4S] cluster</name>
        <dbReference type="ChEBI" id="CHEBI:49883"/>
    </ligand>
</feature>
<feature type="binding site" evidence="1">
    <location>
        <position position="64"/>
    </location>
    <ligand>
        <name>[4Fe-4S] cluster</name>
        <dbReference type="ChEBI" id="CHEBI:49883"/>
    </ligand>
</feature>
<feature type="binding site" evidence="1">
    <location>
        <position position="129"/>
    </location>
    <ligand>
        <name>[4Fe-4S] cluster</name>
        <dbReference type="ChEBI" id="CHEBI:49883"/>
    </ligand>
</feature>
<feature type="binding site" evidence="1">
    <location>
        <position position="158"/>
    </location>
    <ligand>
        <name>[4Fe-4S] cluster</name>
        <dbReference type="ChEBI" id="CHEBI:49883"/>
    </ligand>
</feature>
<comment type="function">
    <text evidence="1">NDH-1 shuttles electrons from NADH, via FMN and iron-sulfur (Fe-S) centers, to quinones in the respiratory chain. The immediate electron acceptor for the enzyme in this species is believed to be ubiquinone. Couples the redox reaction to proton translocation (for every two electrons transferred, four hydrogen ions are translocated across the cytoplasmic membrane), and thus conserves the redox energy in a proton gradient.</text>
</comment>
<comment type="catalytic activity">
    <reaction evidence="1">
        <text>a quinone + NADH + 5 H(+)(in) = a quinol + NAD(+) + 4 H(+)(out)</text>
        <dbReference type="Rhea" id="RHEA:57888"/>
        <dbReference type="ChEBI" id="CHEBI:15378"/>
        <dbReference type="ChEBI" id="CHEBI:24646"/>
        <dbReference type="ChEBI" id="CHEBI:57540"/>
        <dbReference type="ChEBI" id="CHEBI:57945"/>
        <dbReference type="ChEBI" id="CHEBI:132124"/>
    </reaction>
</comment>
<comment type="cofactor">
    <cofactor evidence="1">
        <name>[4Fe-4S] cluster</name>
        <dbReference type="ChEBI" id="CHEBI:49883"/>
    </cofactor>
    <text evidence="1">Binds 1 [4Fe-4S] cluster.</text>
</comment>
<comment type="subunit">
    <text evidence="1">NDH-1 is composed of 13 different subunits. Subunits NuoB, CD, E, F, and G constitute the peripheral sector of the complex.</text>
</comment>
<comment type="subcellular location">
    <subcellularLocation>
        <location evidence="1">Cell inner membrane</location>
        <topology evidence="1">Peripheral membrane protein</topology>
        <orientation evidence="1">Cytoplasmic side</orientation>
    </subcellularLocation>
</comment>
<comment type="similarity">
    <text evidence="1">Belongs to the complex I 20 kDa subunit family.</text>
</comment>
<protein>
    <recommendedName>
        <fullName evidence="1">NADH-quinone oxidoreductase subunit B</fullName>
        <ecNumber evidence="1">7.1.1.-</ecNumber>
    </recommendedName>
    <alternativeName>
        <fullName evidence="1">NADH dehydrogenase I subunit B</fullName>
    </alternativeName>
    <alternativeName>
        <fullName evidence="1">NDH-1 subunit B</fullName>
    </alternativeName>
</protein>
<organism>
    <name type="scientific">Escherichia coli (strain SE11)</name>
    <dbReference type="NCBI Taxonomy" id="409438"/>
    <lineage>
        <taxon>Bacteria</taxon>
        <taxon>Pseudomonadati</taxon>
        <taxon>Pseudomonadota</taxon>
        <taxon>Gammaproteobacteria</taxon>
        <taxon>Enterobacterales</taxon>
        <taxon>Enterobacteriaceae</taxon>
        <taxon>Escherichia</taxon>
    </lineage>
</organism>
<evidence type="ECO:0000255" key="1">
    <source>
        <dbReference type="HAMAP-Rule" id="MF_01356"/>
    </source>
</evidence>